<gene>
    <name evidence="4" type="primary">adaB</name>
    <name type="ORF">ATCC64974_92710</name>
</gene>
<name>ADAB_ASPNG</name>
<sequence>MAFRIPFAQSFWQEYLSGQEANLPRLPEVEQVTETVMRILGGNPGRMQLQGTNTYLVGTGKFRILIDTGQGEASWIEALTKQLEANGLEISHVLLTHWHGDHTGGVPDLITYNPELSSRVYKNTPDLGQQAIHDGQKFHVEGATIRAVFTPGHAFDHMCFLLEEENALFTGDNVLGHGYSVVEDLGTYMTSLTRMADLNCALGYPAHGTRIEDLPAKMKEYIQHKESRMRQVLAALERSRARMTATGGGRRAGALTFPELINSMYGGIPDEIEQALTPFLSQVLWKLAEDRKVGFEGEPSQRRWFAVGPPAATAVRL</sequence>
<accession>G3KLH5</accession>
<comment type="function">
    <text evidence="3">Lactamase-like protein; part of the gene cluster that mediates the biosynthesis of the linear tetracyclic TAN-1612 neuropeptide Y receptor antagonist (PubMed:21866960). The decaketide backbone of TAN-1612 is synthesized by the non-reducing polyketide synthase adaA via condensation of one acetyl-CoA starter unit with 9 malonyl-CoA units. The FAD-dependent monooxygenase adaC then performs hydroxylation at C2 while the polaketide chain is still attached to the NRPKS adaA (PubMed:21866960). The alpha-hydroxylation step at C2 appears to be crucial for the following C18-C1 Claisen cyclization and release of the C9-hydroxyl version of TAN-1612 from the NRPKS adaA, two steps performed by the lactamase-like protein adaB (PubMed:21866960). Finally, the O-methyltransferase adaD performs the C9 O-methylation to complete the biosynthesis of TAN-1612 (PubMed:21866960).</text>
</comment>
<comment type="catalytic activity">
    <reaction evidence="3">
        <text>3-(2,4-dioxopentyl)-2,3,6,8,9-pentahydroxy-1-oxo-1,2,3,4-tetrahydroanthracene-2-carboxyl-[ACP] = 2-acetyl-3,4a,8,10,11,12a-hexahydroxy-1,4,4a,5,12,12a-hexahydrotetracene-1,12-dione + holo-[ACP] + H(+)</text>
        <dbReference type="Rhea" id="RHEA:64096"/>
        <dbReference type="Rhea" id="RHEA-COMP:9685"/>
        <dbReference type="Rhea" id="RHEA-COMP:16520"/>
        <dbReference type="ChEBI" id="CHEBI:15378"/>
        <dbReference type="ChEBI" id="CHEBI:64479"/>
        <dbReference type="ChEBI" id="CHEBI:146218"/>
        <dbReference type="ChEBI" id="CHEBI:149688"/>
    </reaction>
    <physiologicalReaction direction="left-to-right" evidence="3">
        <dbReference type="Rhea" id="RHEA:64097"/>
    </physiologicalReaction>
</comment>
<comment type="cofactor">
    <cofactor evidence="1">
        <name>Zn(2+)</name>
        <dbReference type="ChEBI" id="CHEBI:29105"/>
    </cofactor>
    <text evidence="1">Binds 2 Zn(2+) ions per subunit.</text>
</comment>
<comment type="pathway">
    <text evidence="3">Secondary metabolite biosynthesis.</text>
</comment>
<comment type="similarity">
    <text evidence="5">Belongs to the metallo-beta-lactamase superfamily.</text>
</comment>
<dbReference type="EC" id="3.1.-.-" evidence="3"/>
<dbReference type="EMBL" id="JN257714">
    <property type="protein sequence ID" value="AEN83888.1"/>
    <property type="molecule type" value="Genomic_DNA"/>
</dbReference>
<dbReference type="EMBL" id="OGUI01000016">
    <property type="protein sequence ID" value="SPB51661.1"/>
    <property type="molecule type" value="Genomic_DNA"/>
</dbReference>
<dbReference type="RefSeq" id="XP_001394706.1">
    <property type="nucleotide sequence ID" value="XM_001394669.1"/>
</dbReference>
<dbReference type="SMR" id="G3KLH5"/>
<dbReference type="PaxDb" id="5061-CADANGAP00008888"/>
<dbReference type="EnsemblFungi" id="CAK40779">
    <property type="protein sequence ID" value="CAK40779"/>
    <property type="gene ID" value="An11g07320"/>
</dbReference>
<dbReference type="KEGG" id="ang:An11g07320"/>
<dbReference type="VEuPathDB" id="FungiDB:An11g07320"/>
<dbReference type="VEuPathDB" id="FungiDB:ASPNIDRAFT2_1095189"/>
<dbReference type="VEuPathDB" id="FungiDB:ATCC64974_92710"/>
<dbReference type="VEuPathDB" id="FungiDB:M747DRAFT_334471"/>
<dbReference type="eggNOG" id="KOG0813">
    <property type="taxonomic scope" value="Eukaryota"/>
</dbReference>
<dbReference type="OrthoDB" id="17458at2759"/>
<dbReference type="GO" id="GO:0016787">
    <property type="term" value="F:hydrolase activity"/>
    <property type="evidence" value="ECO:0007669"/>
    <property type="project" value="UniProtKB-KW"/>
</dbReference>
<dbReference type="GO" id="GO:0046872">
    <property type="term" value="F:metal ion binding"/>
    <property type="evidence" value="ECO:0007669"/>
    <property type="project" value="UniProtKB-KW"/>
</dbReference>
<dbReference type="GO" id="GO:0044550">
    <property type="term" value="P:secondary metabolite biosynthetic process"/>
    <property type="evidence" value="ECO:0007669"/>
    <property type="project" value="UniProtKB-ARBA"/>
</dbReference>
<dbReference type="CDD" id="cd07722">
    <property type="entry name" value="LACTB2-like_MBL-fold"/>
    <property type="match status" value="1"/>
</dbReference>
<dbReference type="FunFam" id="3.60.15.10:FF:000041">
    <property type="entry name" value="Metallo-beta-lactamase domain protein"/>
    <property type="match status" value="1"/>
</dbReference>
<dbReference type="Gene3D" id="3.60.15.10">
    <property type="entry name" value="Ribonuclease Z/Hydroxyacylglutathione hydrolase-like"/>
    <property type="match status" value="1"/>
</dbReference>
<dbReference type="Gene3D" id="1.10.10.10">
    <property type="entry name" value="Winged helix-like DNA-binding domain superfamily/Winged helix DNA-binding domain"/>
    <property type="match status" value="1"/>
</dbReference>
<dbReference type="InterPro" id="IPR047921">
    <property type="entry name" value="LACTB2-like_MBL-fold"/>
</dbReference>
<dbReference type="InterPro" id="IPR001279">
    <property type="entry name" value="Metallo-B-lactamas"/>
</dbReference>
<dbReference type="InterPro" id="IPR036866">
    <property type="entry name" value="RibonucZ/Hydroxyglut_hydro"/>
</dbReference>
<dbReference type="InterPro" id="IPR050662">
    <property type="entry name" value="Sec-metab_biosynth-thioest"/>
</dbReference>
<dbReference type="InterPro" id="IPR036388">
    <property type="entry name" value="WH-like_DNA-bd_sf"/>
</dbReference>
<dbReference type="PANTHER" id="PTHR23131">
    <property type="entry name" value="ENDORIBONUCLEASE LACTB2"/>
    <property type="match status" value="1"/>
</dbReference>
<dbReference type="PANTHER" id="PTHR23131:SF2">
    <property type="entry name" value="LACTAMASE-LIKE PROTEIN APTB-RELATED"/>
    <property type="match status" value="1"/>
</dbReference>
<dbReference type="Pfam" id="PF00753">
    <property type="entry name" value="Lactamase_B"/>
    <property type="match status" value="1"/>
</dbReference>
<dbReference type="SMART" id="SM00849">
    <property type="entry name" value="Lactamase_B"/>
    <property type="match status" value="1"/>
</dbReference>
<dbReference type="SUPFAM" id="SSF56281">
    <property type="entry name" value="Metallo-hydrolase/oxidoreductase"/>
    <property type="match status" value="1"/>
</dbReference>
<feature type="chain" id="PRO_0000446351" description="Lactamase-like protein adaB">
    <location>
        <begin position="1"/>
        <end position="317"/>
    </location>
</feature>
<feature type="active site" description="Proton donor/acceptor" evidence="2">
    <location>
        <position position="101"/>
    </location>
</feature>
<feature type="binding site" evidence="1">
    <location>
        <position position="97"/>
    </location>
    <ligand>
        <name>Zn(2+)</name>
        <dbReference type="ChEBI" id="CHEBI:29105"/>
        <label>1</label>
        <note>catalytic</note>
    </ligand>
</feature>
<feature type="binding site" evidence="1">
    <location>
        <position position="99"/>
    </location>
    <ligand>
        <name>Zn(2+)</name>
        <dbReference type="ChEBI" id="CHEBI:29105"/>
        <label>1</label>
        <note>catalytic</note>
    </ligand>
</feature>
<feature type="binding site" evidence="1">
    <location>
        <position position="101"/>
    </location>
    <ligand>
        <name>Zn(2+)</name>
        <dbReference type="ChEBI" id="CHEBI:29105"/>
        <label>2</label>
        <note>catalytic</note>
    </ligand>
</feature>
<feature type="binding site" evidence="1">
    <location>
        <position position="102"/>
    </location>
    <ligand>
        <name>Zn(2+)</name>
        <dbReference type="ChEBI" id="CHEBI:29105"/>
        <label>2</label>
        <note>catalytic</note>
    </ligand>
</feature>
<keyword id="KW-0378">Hydrolase</keyword>
<keyword id="KW-0479">Metal-binding</keyword>
<keyword id="KW-0862">Zinc</keyword>
<organism>
    <name type="scientific">Aspergillus niger</name>
    <dbReference type="NCBI Taxonomy" id="5061"/>
    <lineage>
        <taxon>Eukaryota</taxon>
        <taxon>Fungi</taxon>
        <taxon>Dikarya</taxon>
        <taxon>Ascomycota</taxon>
        <taxon>Pezizomycotina</taxon>
        <taxon>Eurotiomycetes</taxon>
        <taxon>Eurotiomycetidae</taxon>
        <taxon>Eurotiales</taxon>
        <taxon>Aspergillaceae</taxon>
        <taxon>Aspergillus</taxon>
        <taxon>Aspergillus subgen. Circumdati</taxon>
    </lineage>
</organism>
<evidence type="ECO:0000250" key="1">
    <source>
        <dbReference type="UniProtKB" id="Q988B9"/>
    </source>
</evidence>
<evidence type="ECO:0000255" key="2"/>
<evidence type="ECO:0000269" key="3">
    <source>
    </source>
</evidence>
<evidence type="ECO:0000303" key="4">
    <source>
    </source>
</evidence>
<evidence type="ECO:0000305" key="5"/>
<proteinExistence type="evidence at protein level"/>
<reference key="1">
    <citation type="journal article" date="2011" name="J. Am. Chem. Soc.">
        <title>Comparative characterization of fungal anthracenone and naphthacenedione biosynthetic pathways reveals an alpha-hydroxylation-dependent Claisen-like cyclization catalyzed by a dimanganese thioesterase.</title>
        <authorList>
            <person name="Li Y."/>
            <person name="Chooi Y.H."/>
            <person name="Sheng Y."/>
            <person name="Valentine J.S."/>
            <person name="Tang Y."/>
        </authorList>
    </citation>
    <scope>NUCLEOTIDE SEQUENCE [GENOMIC DNA]</scope>
    <scope>IDENTIFICATION</scope>
    <scope>FUNCTION</scope>
    <scope>CATALYTIC ACTIVITY</scope>
    <scope>PATHWAY</scope>
    <source>
        <strain>ATCC 1015 / NV DSM 2061</strain>
    </source>
</reference>
<reference key="2">
    <citation type="journal article" date="2018" name="Front. Microbiol.">
        <title>Forward genetics by genome sequencing uncovers the central role of the Aspergillus niger goxB locus in hydrogen peroxide induced glucose oxidase expression.</title>
        <authorList>
            <person name="Laothanachareon T."/>
            <person name="Tamayo-Ramos J.A."/>
            <person name="Nijsse B."/>
            <person name="Schaap P.J."/>
        </authorList>
    </citation>
    <scope>NUCLEOTIDE SEQUENCE [LARGE SCALE GENOMIC DNA]</scope>
    <source>
        <strain>ATCC 64974 / FGSC A733 / N402</strain>
    </source>
</reference>
<protein>
    <recommendedName>
        <fullName evidence="4">Lactamase-like protein adaB</fullName>
        <ecNumber evidence="3">3.1.-.-</ecNumber>
    </recommendedName>
    <alternativeName>
        <fullName evidence="4">2-acetyl-2-decarboxamidoanthrotainin biosynthesis cluster protein B</fullName>
    </alternativeName>
</protein>